<comment type="function">
    <text evidence="1">Catalyzes the anti-1,4-elimination of the C-3 phosphate and the C-6 proR hydrogen from 5-enolpyruvylshikimate-3-phosphate (EPSP) to yield chorismate, which is the branch point compound that serves as the starting substrate for the three terminal pathways of aromatic amino acid biosynthesis. This reaction introduces a second double bond into the aromatic ring system.</text>
</comment>
<comment type="catalytic activity">
    <reaction evidence="1">
        <text>5-O-(1-carboxyvinyl)-3-phosphoshikimate = chorismate + phosphate</text>
        <dbReference type="Rhea" id="RHEA:21020"/>
        <dbReference type="ChEBI" id="CHEBI:29748"/>
        <dbReference type="ChEBI" id="CHEBI:43474"/>
        <dbReference type="ChEBI" id="CHEBI:57701"/>
        <dbReference type="EC" id="4.2.3.5"/>
    </reaction>
</comment>
<comment type="cofactor">
    <cofactor evidence="1">
        <name>FMNH2</name>
        <dbReference type="ChEBI" id="CHEBI:57618"/>
    </cofactor>
    <text evidence="1">Reduced FMN (FMNH(2)).</text>
</comment>
<comment type="pathway">
    <text evidence="1">Metabolic intermediate biosynthesis; chorismate biosynthesis; chorismate from D-erythrose 4-phosphate and phosphoenolpyruvate: step 7/7.</text>
</comment>
<comment type="subunit">
    <text evidence="1">Homotetramer.</text>
</comment>
<comment type="similarity">
    <text evidence="1">Belongs to the chorismate synthase family.</text>
</comment>
<accession>Q2NSH3</accession>
<organism>
    <name type="scientific">Sodalis glossinidius (strain morsitans)</name>
    <dbReference type="NCBI Taxonomy" id="343509"/>
    <lineage>
        <taxon>Bacteria</taxon>
        <taxon>Pseudomonadati</taxon>
        <taxon>Pseudomonadota</taxon>
        <taxon>Gammaproteobacteria</taxon>
        <taxon>Enterobacterales</taxon>
        <taxon>Bruguierivoracaceae</taxon>
        <taxon>Sodalis</taxon>
    </lineage>
</organism>
<gene>
    <name evidence="1" type="primary">aroC</name>
    <name type="ordered locus">SG1627</name>
</gene>
<proteinExistence type="inferred from homology"/>
<evidence type="ECO:0000255" key="1">
    <source>
        <dbReference type="HAMAP-Rule" id="MF_00300"/>
    </source>
</evidence>
<name>AROC_SODGM</name>
<keyword id="KW-0028">Amino-acid biosynthesis</keyword>
<keyword id="KW-0057">Aromatic amino acid biosynthesis</keyword>
<keyword id="KW-0274">FAD</keyword>
<keyword id="KW-0285">Flavoprotein</keyword>
<keyword id="KW-0288">FMN</keyword>
<keyword id="KW-0456">Lyase</keyword>
<keyword id="KW-0521">NADP</keyword>
<reference key="1">
    <citation type="journal article" date="2006" name="Genome Res.">
        <title>Massive genome erosion and functional adaptations provide insights into the symbiotic lifestyle of Sodalis glossinidius in the tsetse host.</title>
        <authorList>
            <person name="Toh H."/>
            <person name="Weiss B.L."/>
            <person name="Perkin S.A.H."/>
            <person name="Yamashita A."/>
            <person name="Oshima K."/>
            <person name="Hattori M."/>
            <person name="Aksoy S."/>
        </authorList>
    </citation>
    <scope>NUCLEOTIDE SEQUENCE [LARGE SCALE GENOMIC DNA]</scope>
    <source>
        <strain>morsitans</strain>
    </source>
</reference>
<feature type="chain" id="PRO_0000256337" description="Chorismate synthase">
    <location>
        <begin position="1"/>
        <end position="361"/>
    </location>
</feature>
<feature type="binding site" evidence="1">
    <location>
        <position position="48"/>
    </location>
    <ligand>
        <name>NADP(+)</name>
        <dbReference type="ChEBI" id="CHEBI:58349"/>
    </ligand>
</feature>
<feature type="binding site" evidence="1">
    <location>
        <position position="54"/>
    </location>
    <ligand>
        <name>NADP(+)</name>
        <dbReference type="ChEBI" id="CHEBI:58349"/>
    </ligand>
</feature>
<feature type="binding site" evidence="1">
    <location>
        <begin position="125"/>
        <end position="127"/>
    </location>
    <ligand>
        <name>FMN</name>
        <dbReference type="ChEBI" id="CHEBI:58210"/>
    </ligand>
</feature>
<feature type="binding site" evidence="1">
    <location>
        <begin position="238"/>
        <end position="239"/>
    </location>
    <ligand>
        <name>FMN</name>
        <dbReference type="ChEBI" id="CHEBI:58210"/>
    </ligand>
</feature>
<feature type="binding site" evidence="1">
    <location>
        <position position="278"/>
    </location>
    <ligand>
        <name>FMN</name>
        <dbReference type="ChEBI" id="CHEBI:58210"/>
    </ligand>
</feature>
<feature type="binding site" evidence="1">
    <location>
        <begin position="293"/>
        <end position="297"/>
    </location>
    <ligand>
        <name>FMN</name>
        <dbReference type="ChEBI" id="CHEBI:58210"/>
    </ligand>
</feature>
<feature type="binding site" evidence="1">
    <location>
        <position position="319"/>
    </location>
    <ligand>
        <name>FMN</name>
        <dbReference type="ChEBI" id="CHEBI:58210"/>
    </ligand>
</feature>
<sequence length="361" mass="38793">MAGNSIGQFFRVTTFGESHGSALGGIVDGVPPGIPLCEEDLQHDLDRRRPGTSRYTTQRREPDRVKILSGVFEGVTTGTSIGLLIDNTDQRSQDYSAIKDFYRPGHADYTYAQKYGRRDYRGGGRSSARETAMRVAAGAIAKKYLAQQCGVRVRGYLAQMGDIHCELKDWTQVEKNSFFCPDVDCLEALDALIHDLKKAGDSIGAGVTVVAENLPAGLGEPVFDRLDADLAHALMSINAVKGVEIGDGFAVIGKRGSENRDEITLEGFQSNHAGGILGGISSGQPVIAHLALKPTSSIMVPGRTVNRSGDAVEMVTRGRHDPCVGIRAVPIAEAMMAIVLMDHFLRQRAQCADVVAAAPIR</sequence>
<dbReference type="EC" id="4.2.3.5" evidence="1"/>
<dbReference type="EMBL" id="AP008232">
    <property type="protein sequence ID" value="BAE74902.1"/>
    <property type="molecule type" value="Genomic_DNA"/>
</dbReference>
<dbReference type="RefSeq" id="WP_011411455.1">
    <property type="nucleotide sequence ID" value="NC_007712.1"/>
</dbReference>
<dbReference type="SMR" id="Q2NSH3"/>
<dbReference type="STRING" id="343509.SG1627"/>
<dbReference type="KEGG" id="sgl:SG1627"/>
<dbReference type="eggNOG" id="COG0082">
    <property type="taxonomic scope" value="Bacteria"/>
</dbReference>
<dbReference type="HOGENOM" id="CLU_034547_0_2_6"/>
<dbReference type="OrthoDB" id="9771806at2"/>
<dbReference type="UniPathway" id="UPA00053">
    <property type="reaction ID" value="UER00090"/>
</dbReference>
<dbReference type="Proteomes" id="UP000001932">
    <property type="component" value="Chromosome"/>
</dbReference>
<dbReference type="GO" id="GO:0005829">
    <property type="term" value="C:cytosol"/>
    <property type="evidence" value="ECO:0007669"/>
    <property type="project" value="TreeGrafter"/>
</dbReference>
<dbReference type="GO" id="GO:0004107">
    <property type="term" value="F:chorismate synthase activity"/>
    <property type="evidence" value="ECO:0007669"/>
    <property type="project" value="UniProtKB-UniRule"/>
</dbReference>
<dbReference type="GO" id="GO:0010181">
    <property type="term" value="F:FMN binding"/>
    <property type="evidence" value="ECO:0007669"/>
    <property type="project" value="TreeGrafter"/>
</dbReference>
<dbReference type="GO" id="GO:0008652">
    <property type="term" value="P:amino acid biosynthetic process"/>
    <property type="evidence" value="ECO:0007669"/>
    <property type="project" value="UniProtKB-KW"/>
</dbReference>
<dbReference type="GO" id="GO:0009073">
    <property type="term" value="P:aromatic amino acid family biosynthetic process"/>
    <property type="evidence" value="ECO:0007669"/>
    <property type="project" value="UniProtKB-KW"/>
</dbReference>
<dbReference type="GO" id="GO:0009423">
    <property type="term" value="P:chorismate biosynthetic process"/>
    <property type="evidence" value="ECO:0007669"/>
    <property type="project" value="UniProtKB-UniRule"/>
</dbReference>
<dbReference type="CDD" id="cd07304">
    <property type="entry name" value="Chorismate_synthase"/>
    <property type="match status" value="1"/>
</dbReference>
<dbReference type="FunFam" id="3.60.150.10:FF:000001">
    <property type="entry name" value="Chorismate synthase"/>
    <property type="match status" value="1"/>
</dbReference>
<dbReference type="Gene3D" id="3.60.150.10">
    <property type="entry name" value="Chorismate synthase AroC"/>
    <property type="match status" value="1"/>
</dbReference>
<dbReference type="HAMAP" id="MF_00300">
    <property type="entry name" value="Chorismate_synth"/>
    <property type="match status" value="1"/>
</dbReference>
<dbReference type="InterPro" id="IPR000453">
    <property type="entry name" value="Chorismate_synth"/>
</dbReference>
<dbReference type="InterPro" id="IPR035904">
    <property type="entry name" value="Chorismate_synth_AroC_sf"/>
</dbReference>
<dbReference type="InterPro" id="IPR020541">
    <property type="entry name" value="Chorismate_synthase_CS"/>
</dbReference>
<dbReference type="NCBIfam" id="TIGR00033">
    <property type="entry name" value="aroC"/>
    <property type="match status" value="1"/>
</dbReference>
<dbReference type="NCBIfam" id="NF003793">
    <property type="entry name" value="PRK05382.1"/>
    <property type="match status" value="1"/>
</dbReference>
<dbReference type="PANTHER" id="PTHR21085">
    <property type="entry name" value="CHORISMATE SYNTHASE"/>
    <property type="match status" value="1"/>
</dbReference>
<dbReference type="PANTHER" id="PTHR21085:SF0">
    <property type="entry name" value="CHORISMATE SYNTHASE"/>
    <property type="match status" value="1"/>
</dbReference>
<dbReference type="Pfam" id="PF01264">
    <property type="entry name" value="Chorismate_synt"/>
    <property type="match status" value="1"/>
</dbReference>
<dbReference type="PIRSF" id="PIRSF001456">
    <property type="entry name" value="Chorismate_synth"/>
    <property type="match status" value="1"/>
</dbReference>
<dbReference type="SUPFAM" id="SSF103263">
    <property type="entry name" value="Chorismate synthase, AroC"/>
    <property type="match status" value="1"/>
</dbReference>
<dbReference type="PROSITE" id="PS00787">
    <property type="entry name" value="CHORISMATE_SYNTHASE_1"/>
    <property type="match status" value="1"/>
</dbReference>
<dbReference type="PROSITE" id="PS00788">
    <property type="entry name" value="CHORISMATE_SYNTHASE_2"/>
    <property type="match status" value="1"/>
</dbReference>
<dbReference type="PROSITE" id="PS00789">
    <property type="entry name" value="CHORISMATE_SYNTHASE_3"/>
    <property type="match status" value="1"/>
</dbReference>
<protein>
    <recommendedName>
        <fullName evidence="1">Chorismate synthase</fullName>
        <shortName evidence="1">CS</shortName>
        <ecNumber evidence="1">4.2.3.5</ecNumber>
    </recommendedName>
    <alternativeName>
        <fullName evidence="1">5-enolpyruvylshikimate-3-phosphate phospholyase</fullName>
    </alternativeName>
</protein>